<accession>Q83G89</accession>
<organism>
    <name type="scientific">Tropheryma whipplei (strain Twist)</name>
    <name type="common">Whipple's bacillus</name>
    <dbReference type="NCBI Taxonomy" id="203267"/>
    <lineage>
        <taxon>Bacteria</taxon>
        <taxon>Bacillati</taxon>
        <taxon>Actinomycetota</taxon>
        <taxon>Actinomycetes</taxon>
        <taxon>Micrococcales</taxon>
        <taxon>Tropherymataceae</taxon>
        <taxon>Tropheryma</taxon>
    </lineage>
</organism>
<proteinExistence type="inferred from homology"/>
<dbReference type="EC" id="7.1.2.2" evidence="1"/>
<dbReference type="EMBL" id="AE014184">
    <property type="protein sequence ID" value="AAO44523.1"/>
    <property type="status" value="ALT_INIT"/>
    <property type="molecule type" value="Genomic_DNA"/>
</dbReference>
<dbReference type="RefSeq" id="WP_011096294.1">
    <property type="nucleotide sequence ID" value="NC_004572.3"/>
</dbReference>
<dbReference type="SMR" id="Q83G89"/>
<dbReference type="STRING" id="203267.TWT_426"/>
<dbReference type="GeneID" id="67388115"/>
<dbReference type="KEGG" id="twh:TWT_426"/>
<dbReference type="eggNOG" id="COG0056">
    <property type="taxonomic scope" value="Bacteria"/>
</dbReference>
<dbReference type="HOGENOM" id="CLU_010091_2_1_11"/>
<dbReference type="OrthoDB" id="9803053at2"/>
<dbReference type="Proteomes" id="UP000002200">
    <property type="component" value="Chromosome"/>
</dbReference>
<dbReference type="GO" id="GO:0005886">
    <property type="term" value="C:plasma membrane"/>
    <property type="evidence" value="ECO:0007669"/>
    <property type="project" value="UniProtKB-SubCell"/>
</dbReference>
<dbReference type="GO" id="GO:0045259">
    <property type="term" value="C:proton-transporting ATP synthase complex"/>
    <property type="evidence" value="ECO:0007669"/>
    <property type="project" value="UniProtKB-KW"/>
</dbReference>
<dbReference type="GO" id="GO:0043531">
    <property type="term" value="F:ADP binding"/>
    <property type="evidence" value="ECO:0007669"/>
    <property type="project" value="TreeGrafter"/>
</dbReference>
<dbReference type="GO" id="GO:0005524">
    <property type="term" value="F:ATP binding"/>
    <property type="evidence" value="ECO:0007669"/>
    <property type="project" value="UniProtKB-UniRule"/>
</dbReference>
<dbReference type="GO" id="GO:0046933">
    <property type="term" value="F:proton-transporting ATP synthase activity, rotational mechanism"/>
    <property type="evidence" value="ECO:0007669"/>
    <property type="project" value="UniProtKB-UniRule"/>
</dbReference>
<dbReference type="CDD" id="cd18113">
    <property type="entry name" value="ATP-synt_F1_alpha_C"/>
    <property type="match status" value="1"/>
</dbReference>
<dbReference type="CDD" id="cd18116">
    <property type="entry name" value="ATP-synt_F1_alpha_N"/>
    <property type="match status" value="1"/>
</dbReference>
<dbReference type="CDD" id="cd01132">
    <property type="entry name" value="F1-ATPase_alpha_CD"/>
    <property type="match status" value="1"/>
</dbReference>
<dbReference type="FunFam" id="1.20.150.20:FF:000001">
    <property type="entry name" value="ATP synthase subunit alpha"/>
    <property type="match status" value="1"/>
</dbReference>
<dbReference type="FunFam" id="3.40.50.300:FF:000002">
    <property type="entry name" value="ATP synthase subunit alpha"/>
    <property type="match status" value="1"/>
</dbReference>
<dbReference type="Gene3D" id="2.40.30.20">
    <property type="match status" value="1"/>
</dbReference>
<dbReference type="Gene3D" id="1.20.150.20">
    <property type="entry name" value="ATP synthase alpha/beta chain, C-terminal domain"/>
    <property type="match status" value="1"/>
</dbReference>
<dbReference type="Gene3D" id="3.40.50.300">
    <property type="entry name" value="P-loop containing nucleotide triphosphate hydrolases"/>
    <property type="match status" value="1"/>
</dbReference>
<dbReference type="HAMAP" id="MF_01346">
    <property type="entry name" value="ATP_synth_alpha_bact"/>
    <property type="match status" value="1"/>
</dbReference>
<dbReference type="InterPro" id="IPR023366">
    <property type="entry name" value="ATP_synth_asu-like_sf"/>
</dbReference>
<dbReference type="InterPro" id="IPR000793">
    <property type="entry name" value="ATP_synth_asu_C"/>
</dbReference>
<dbReference type="InterPro" id="IPR038376">
    <property type="entry name" value="ATP_synth_asu_C_sf"/>
</dbReference>
<dbReference type="InterPro" id="IPR033732">
    <property type="entry name" value="ATP_synth_F1_a_nt-bd_dom"/>
</dbReference>
<dbReference type="InterPro" id="IPR005294">
    <property type="entry name" value="ATP_synth_F1_asu"/>
</dbReference>
<dbReference type="InterPro" id="IPR020003">
    <property type="entry name" value="ATPase_a/bsu_AS"/>
</dbReference>
<dbReference type="InterPro" id="IPR004100">
    <property type="entry name" value="ATPase_F1/V1/A1_a/bsu_N"/>
</dbReference>
<dbReference type="InterPro" id="IPR036121">
    <property type="entry name" value="ATPase_F1/V1/A1_a/bsu_N_sf"/>
</dbReference>
<dbReference type="InterPro" id="IPR000194">
    <property type="entry name" value="ATPase_F1/V1/A1_a/bsu_nucl-bd"/>
</dbReference>
<dbReference type="InterPro" id="IPR027417">
    <property type="entry name" value="P-loop_NTPase"/>
</dbReference>
<dbReference type="NCBIfam" id="TIGR00962">
    <property type="entry name" value="atpA"/>
    <property type="match status" value="1"/>
</dbReference>
<dbReference type="NCBIfam" id="NF009884">
    <property type="entry name" value="PRK13343.1"/>
    <property type="match status" value="1"/>
</dbReference>
<dbReference type="PANTHER" id="PTHR48082">
    <property type="entry name" value="ATP SYNTHASE SUBUNIT ALPHA, MITOCHONDRIAL"/>
    <property type="match status" value="1"/>
</dbReference>
<dbReference type="PANTHER" id="PTHR48082:SF2">
    <property type="entry name" value="ATP SYNTHASE SUBUNIT ALPHA, MITOCHONDRIAL"/>
    <property type="match status" value="1"/>
</dbReference>
<dbReference type="Pfam" id="PF00006">
    <property type="entry name" value="ATP-synt_ab"/>
    <property type="match status" value="1"/>
</dbReference>
<dbReference type="Pfam" id="PF00306">
    <property type="entry name" value="ATP-synt_ab_C"/>
    <property type="match status" value="1"/>
</dbReference>
<dbReference type="Pfam" id="PF02874">
    <property type="entry name" value="ATP-synt_ab_N"/>
    <property type="match status" value="1"/>
</dbReference>
<dbReference type="SUPFAM" id="SSF47917">
    <property type="entry name" value="C-terminal domain of alpha and beta subunits of F1 ATP synthase"/>
    <property type="match status" value="1"/>
</dbReference>
<dbReference type="SUPFAM" id="SSF50615">
    <property type="entry name" value="N-terminal domain of alpha and beta subunits of F1 ATP synthase"/>
    <property type="match status" value="1"/>
</dbReference>
<dbReference type="SUPFAM" id="SSF52540">
    <property type="entry name" value="P-loop containing nucleoside triphosphate hydrolases"/>
    <property type="match status" value="1"/>
</dbReference>
<dbReference type="PROSITE" id="PS00152">
    <property type="entry name" value="ATPASE_ALPHA_BETA"/>
    <property type="match status" value="1"/>
</dbReference>
<reference key="1">
    <citation type="journal article" date="2003" name="Genome Res.">
        <title>Tropheryma whipplei twist: a human pathogenic Actinobacteria with a reduced genome.</title>
        <authorList>
            <person name="Raoult D."/>
            <person name="Ogata H."/>
            <person name="Audic S."/>
            <person name="Robert C."/>
            <person name="Suhre K."/>
            <person name="Drancourt M."/>
            <person name="Claverie J.-M."/>
        </authorList>
    </citation>
    <scope>NUCLEOTIDE SEQUENCE [LARGE SCALE GENOMIC DNA]</scope>
    <source>
        <strain>Twist</strain>
    </source>
</reference>
<protein>
    <recommendedName>
        <fullName evidence="1">ATP synthase subunit alpha</fullName>
        <ecNumber evidence="1">7.1.2.2</ecNumber>
    </recommendedName>
    <alternativeName>
        <fullName evidence="1">ATP synthase F1 sector subunit alpha</fullName>
    </alternativeName>
    <alternativeName>
        <fullName evidence="1">F-ATPase subunit alpha</fullName>
    </alternativeName>
</protein>
<keyword id="KW-0066">ATP synthesis</keyword>
<keyword id="KW-0067">ATP-binding</keyword>
<keyword id="KW-1003">Cell membrane</keyword>
<keyword id="KW-0139">CF(1)</keyword>
<keyword id="KW-0375">Hydrogen ion transport</keyword>
<keyword id="KW-0406">Ion transport</keyword>
<keyword id="KW-0472">Membrane</keyword>
<keyword id="KW-0547">Nucleotide-binding</keyword>
<keyword id="KW-1185">Reference proteome</keyword>
<keyword id="KW-1278">Translocase</keyword>
<keyword id="KW-0813">Transport</keyword>
<sequence>MSKQPIITSEEVRGVIRNLLDSTLSAAREANEFEVGRVVDAADGVAHIEGLPALMASELVEFSNGTFGVTLNLDEDLAGVVVLGEFDGIVEGMDVRSTGRVLSIPVGDAFLGRVVDPLGRPVDGLGEVPHETYRELELQAAGVMQRRSVHEPIQTGIKAIDTMIPIGRGQRQLIIGDRQTGKTTIAIDTIINQKDNWSDPEKRVFCIYVAIGQKGSTIAGVKRVLEEAGCMEYTTIVATPASDPAGFKYIAPYSGSAIGQHWMYQGRHVLIVFDDLSKQAEAYRAISLLLRRPPGREAYPGDVFYLHSRLLERCAKLSDEMGGGSMTGLPIIETKANDISAYIPTNVISITDGQIFLQSDLFNANQRPAVDVGISVSRVGGDAQIKSIKKVSGMLKLELAQYRALEAFSMFASDLDAVSRRQLDRGARLSELLRQQQQSPYPVEDQVVSIWVGSNGYIDDIPLSDVLDFERDLLEYLRNRTSILDDLRTCGDLTDALLERLKEAVESFKNKVYFMRVDEREKDPLEDENIGQEELVRSRRAN</sequence>
<feature type="chain" id="PRO_0000238392" description="ATP synthase subunit alpha">
    <location>
        <begin position="1"/>
        <end position="542"/>
    </location>
</feature>
<feature type="binding site" evidence="1">
    <location>
        <begin position="176"/>
        <end position="183"/>
    </location>
    <ligand>
        <name>ATP</name>
        <dbReference type="ChEBI" id="CHEBI:30616"/>
    </ligand>
</feature>
<feature type="site" description="Required for activity" evidence="1">
    <location>
        <position position="375"/>
    </location>
</feature>
<evidence type="ECO:0000255" key="1">
    <source>
        <dbReference type="HAMAP-Rule" id="MF_01346"/>
    </source>
</evidence>
<evidence type="ECO:0000305" key="2"/>
<name>ATPA_TROWT</name>
<comment type="function">
    <text evidence="1">Produces ATP from ADP in the presence of a proton gradient across the membrane. The alpha chain is a regulatory subunit.</text>
</comment>
<comment type="catalytic activity">
    <reaction evidence="1">
        <text>ATP + H2O + 4 H(+)(in) = ADP + phosphate + 5 H(+)(out)</text>
        <dbReference type="Rhea" id="RHEA:57720"/>
        <dbReference type="ChEBI" id="CHEBI:15377"/>
        <dbReference type="ChEBI" id="CHEBI:15378"/>
        <dbReference type="ChEBI" id="CHEBI:30616"/>
        <dbReference type="ChEBI" id="CHEBI:43474"/>
        <dbReference type="ChEBI" id="CHEBI:456216"/>
        <dbReference type="EC" id="7.1.2.2"/>
    </reaction>
</comment>
<comment type="subunit">
    <text evidence="1">F-type ATPases have 2 components, CF(1) - the catalytic core - and CF(0) - the membrane proton channel. CF(1) has five subunits: alpha(3), beta(3), gamma(1), delta(1), epsilon(1). CF(0) has three main subunits: a(1), b(2) and c(9-12). The alpha and beta chains form an alternating ring which encloses part of the gamma chain. CF(1) is attached to CF(0) by a central stalk formed by the gamma and epsilon chains, while a peripheral stalk is formed by the delta and b chains.</text>
</comment>
<comment type="subcellular location">
    <subcellularLocation>
        <location evidence="1">Cell membrane</location>
        <topology evidence="1">Peripheral membrane protein</topology>
    </subcellularLocation>
</comment>
<comment type="similarity">
    <text evidence="1">Belongs to the ATPase alpha/beta chains family.</text>
</comment>
<comment type="sequence caution" evidence="2">
    <conflict type="erroneous initiation">
        <sequence resource="EMBL-CDS" id="AAO44523"/>
    </conflict>
</comment>
<gene>
    <name evidence="1" type="primary">atpA</name>
    <name type="synonym">twt426</name>
    <name type="ordered locus">TWT_426</name>
</gene>